<accession>P0C8A2</accession>
<sequence length="97" mass="10672">MRTLSLLLALLFLAAQTLAQPIDEGAEEVITEEPEITETQDPTTIMLIERGIGGDSTDATRSTITCYCRSRCRMLEKNSGTCRSSNCTYTLCCKKTS</sequence>
<name>DEFA2_ORNAN</name>
<feature type="signal peptide" evidence="2">
    <location>
        <begin position="1"/>
        <end position="19"/>
    </location>
</feature>
<feature type="propeptide" id="PRO_0000352684" evidence="2">
    <location>
        <begin position="20"/>
        <end position="61"/>
    </location>
</feature>
<feature type="peptide" id="PRO_0000352685" description="Defensin-A2">
    <location>
        <begin position="62"/>
        <end position="93"/>
    </location>
</feature>
<feature type="propeptide" id="PRO_0000352686" evidence="2">
    <location>
        <begin position="96"/>
        <end position="97"/>
    </location>
</feature>
<feature type="disulfide bond" evidence="1">
    <location>
        <begin position="66"/>
        <end position="93"/>
    </location>
</feature>
<feature type="disulfide bond" evidence="1">
    <location>
        <begin position="68"/>
        <end position="82"/>
    </location>
</feature>
<feature type="disulfide bond" evidence="1">
    <location>
        <begin position="72"/>
        <end position="92"/>
    </location>
</feature>
<keyword id="KW-0044">Antibiotic</keyword>
<keyword id="KW-0929">Antimicrobial</keyword>
<keyword id="KW-0165">Cleavage on pair of basic residues</keyword>
<keyword id="KW-0211">Defensin</keyword>
<keyword id="KW-1015">Disulfide bond</keyword>
<keyword id="KW-1185">Reference proteome</keyword>
<keyword id="KW-0964">Secreted</keyword>
<keyword id="KW-0732">Signal</keyword>
<proteinExistence type="evidence at transcript level"/>
<evidence type="ECO:0000250" key="1"/>
<evidence type="ECO:0000255" key="2"/>
<evidence type="ECO:0000269" key="3">
    <source>
    </source>
</evidence>
<evidence type="ECO:0000303" key="4">
    <source>
    </source>
</evidence>
<evidence type="ECO:0000303" key="5">
    <source>
    </source>
</evidence>
<evidence type="ECO:0000305" key="6"/>
<evidence type="ECO:0000305" key="7">
    <source>
    </source>
</evidence>
<evidence type="ECO:0000305" key="8">
    <source>
    </source>
</evidence>
<comment type="function">
    <text evidence="1">Has antimicrobial activity.</text>
</comment>
<comment type="subcellular location">
    <subcellularLocation>
        <location evidence="1">Secreted</location>
    </subcellularLocation>
</comment>
<comment type="tissue specificity">
    <text evidence="3">Highly expressed in intestine, expressed at lower levels in spleen, and at very low levels in kidney and lung.</text>
</comment>
<comment type="similarity">
    <text evidence="6">Belongs to the alpha-defensin family.</text>
</comment>
<comment type="online information" name="Platypus resources">
    <link uri="https://www.twinkl.ch/search?q=platypus"/>
</comment>
<dbReference type="SMR" id="P0C8A2"/>
<dbReference type="FunCoup" id="P0C8A2">
    <property type="interactions" value="230"/>
</dbReference>
<dbReference type="InParanoid" id="P0C8A2"/>
<dbReference type="Proteomes" id="UP000002279">
    <property type="component" value="Unplaced"/>
</dbReference>
<dbReference type="GO" id="GO:0005615">
    <property type="term" value="C:extracellular space"/>
    <property type="evidence" value="ECO:0000318"/>
    <property type="project" value="GO_Central"/>
</dbReference>
<dbReference type="GO" id="GO:0019731">
    <property type="term" value="P:antibacterial humoral response"/>
    <property type="evidence" value="ECO:0000318"/>
    <property type="project" value="GO_Central"/>
</dbReference>
<dbReference type="GO" id="GO:0061844">
    <property type="term" value="P:antimicrobial humoral immune response mediated by antimicrobial peptide"/>
    <property type="evidence" value="ECO:0000318"/>
    <property type="project" value="GO_Central"/>
</dbReference>
<dbReference type="GO" id="GO:0071222">
    <property type="term" value="P:cellular response to lipopolysaccharide"/>
    <property type="evidence" value="ECO:0000318"/>
    <property type="project" value="GO_Central"/>
</dbReference>
<dbReference type="GO" id="GO:0050829">
    <property type="term" value="P:defense response to Gram-negative bacterium"/>
    <property type="evidence" value="ECO:0000318"/>
    <property type="project" value="GO_Central"/>
</dbReference>
<dbReference type="GO" id="GO:0050830">
    <property type="term" value="P:defense response to Gram-positive bacterium"/>
    <property type="evidence" value="ECO:0000318"/>
    <property type="project" value="GO_Central"/>
</dbReference>
<dbReference type="GO" id="GO:0051673">
    <property type="term" value="P:disruption of plasma membrane integrity in another organism"/>
    <property type="evidence" value="ECO:0000318"/>
    <property type="project" value="GO_Central"/>
</dbReference>
<dbReference type="GO" id="GO:0002227">
    <property type="term" value="P:innate immune response in mucosa"/>
    <property type="evidence" value="ECO:0000318"/>
    <property type="project" value="GO_Central"/>
</dbReference>
<dbReference type="InterPro" id="IPR016327">
    <property type="entry name" value="Alpha-defensin"/>
</dbReference>
<dbReference type="InterPro" id="IPR006081">
    <property type="entry name" value="Alpha-defensin_C"/>
</dbReference>
<dbReference type="InterPro" id="IPR002366">
    <property type="entry name" value="Alpha-defensin_N"/>
</dbReference>
<dbReference type="PANTHER" id="PTHR11876">
    <property type="entry name" value="ALPHA-DEFENSIN 1"/>
    <property type="match status" value="1"/>
</dbReference>
<dbReference type="PANTHER" id="PTHR11876:SF28">
    <property type="entry name" value="ALPHA-DEFENSIN 1"/>
    <property type="match status" value="1"/>
</dbReference>
<dbReference type="Pfam" id="PF00323">
    <property type="entry name" value="Defensin_1"/>
    <property type="match status" value="1"/>
</dbReference>
<dbReference type="Pfam" id="PF00879">
    <property type="entry name" value="Defensin_propep"/>
    <property type="match status" value="1"/>
</dbReference>
<dbReference type="PIRSF" id="PIRSF001875">
    <property type="entry name" value="Alpha-defensin"/>
    <property type="match status" value="1"/>
</dbReference>
<dbReference type="SMART" id="SM01418">
    <property type="entry name" value="Defensin_propep"/>
    <property type="match status" value="1"/>
</dbReference>
<dbReference type="PROSITE" id="PS00269">
    <property type="entry name" value="DEFENSIN"/>
    <property type="match status" value="1"/>
</dbReference>
<reference key="1">
    <citation type="journal article" date="2008" name="Genome Res.">
        <title>Defensins and the convergent evolution of platypus and reptile venom genes.</title>
        <authorList>
            <person name="Whittington C.M."/>
            <person name="Papenfuss A.T."/>
            <person name="Bansal P."/>
            <person name="Torres A.M."/>
            <person name="Wong E.S."/>
            <person name="Deakin J.E."/>
            <person name="Graves T."/>
            <person name="Alsop A."/>
            <person name="Schatzkamer K."/>
            <person name="Kremitzki C."/>
            <person name="Ponting C.P."/>
            <person name="Temple-Smith P."/>
            <person name="Warren W.C."/>
            <person name="Kuchel P.W."/>
            <person name="Belov K."/>
        </authorList>
    </citation>
    <scope>NUCLEOTIDE SEQUENCE [MRNA]</scope>
</reference>
<reference key="2">
    <citation type="journal article" date="2008" name="Toxicon">
        <title>Expression patterns of platypus defensin and related venom genes across a range of tissue types reveal the possibility of broader functions for OvDLPs than previously suspected.</title>
        <authorList>
            <person name="Whittington C.M."/>
            <person name="Papenfuss A.T."/>
            <person name="Kuchel P.W."/>
            <person name="Belov K."/>
        </authorList>
    </citation>
    <scope>TISSUE SPECIFICITY</scope>
</reference>
<organism>
    <name type="scientific">Ornithorhynchus anatinus</name>
    <name type="common">Duckbill platypus</name>
    <dbReference type="NCBI Taxonomy" id="9258"/>
    <lineage>
        <taxon>Eukaryota</taxon>
        <taxon>Metazoa</taxon>
        <taxon>Chordata</taxon>
        <taxon>Craniata</taxon>
        <taxon>Vertebrata</taxon>
        <taxon>Euteleostomi</taxon>
        <taxon>Mammalia</taxon>
        <taxon>Monotremata</taxon>
        <taxon>Ornithorhynchidae</taxon>
        <taxon>Ornithorhynchus</taxon>
    </lineage>
</organism>
<protein>
    <recommendedName>
        <fullName evidence="7 8">Defensin-A2</fullName>
        <shortName evidence="4">DefA2</shortName>
        <shortName evidence="5">OaDefA2</shortName>
    </recommendedName>
</protein>